<protein>
    <recommendedName>
        <fullName evidence="1">UPF0502 protein PBPRB0676</fullName>
    </recommendedName>
</protein>
<dbReference type="EMBL" id="CR378677">
    <property type="protein sequence ID" value="CAG22549.1"/>
    <property type="molecule type" value="Genomic_DNA"/>
</dbReference>
<dbReference type="RefSeq" id="WP_011220763.1">
    <property type="nucleotide sequence ID" value="NC_006371.1"/>
</dbReference>
<dbReference type="SMR" id="Q6LJI1"/>
<dbReference type="STRING" id="298386.PBPRB0676"/>
<dbReference type="KEGG" id="ppr:PBPRB0676"/>
<dbReference type="eggNOG" id="COG3132">
    <property type="taxonomic scope" value="Bacteria"/>
</dbReference>
<dbReference type="HOGENOM" id="CLU_057831_2_0_6"/>
<dbReference type="Proteomes" id="UP000000593">
    <property type="component" value="Chromosome 2"/>
</dbReference>
<dbReference type="Gene3D" id="1.10.10.10">
    <property type="entry name" value="Winged helix-like DNA-binding domain superfamily/Winged helix DNA-binding domain"/>
    <property type="match status" value="2"/>
</dbReference>
<dbReference type="HAMAP" id="MF_01584">
    <property type="entry name" value="UPF0502"/>
    <property type="match status" value="1"/>
</dbReference>
<dbReference type="InterPro" id="IPR007432">
    <property type="entry name" value="DUF480"/>
</dbReference>
<dbReference type="InterPro" id="IPR036388">
    <property type="entry name" value="WH-like_DNA-bd_sf"/>
</dbReference>
<dbReference type="InterPro" id="IPR036390">
    <property type="entry name" value="WH_DNA-bd_sf"/>
</dbReference>
<dbReference type="PANTHER" id="PTHR38768">
    <property type="entry name" value="UPF0502 PROTEIN YCEH"/>
    <property type="match status" value="1"/>
</dbReference>
<dbReference type="PANTHER" id="PTHR38768:SF1">
    <property type="entry name" value="UPF0502 PROTEIN YCEH"/>
    <property type="match status" value="1"/>
</dbReference>
<dbReference type="Pfam" id="PF04337">
    <property type="entry name" value="DUF480"/>
    <property type="match status" value="1"/>
</dbReference>
<dbReference type="SUPFAM" id="SSF46785">
    <property type="entry name" value="Winged helix' DNA-binding domain"/>
    <property type="match status" value="2"/>
</dbReference>
<proteinExistence type="inferred from homology"/>
<accession>Q6LJI1</accession>
<name>Y4676_PHOPR</name>
<evidence type="ECO:0000255" key="1">
    <source>
        <dbReference type="HAMAP-Rule" id="MF_01584"/>
    </source>
</evidence>
<gene>
    <name type="ordered locus">PBPRB0676</name>
</gene>
<comment type="similarity">
    <text evidence="1">Belongs to the UPF0502 family.</text>
</comment>
<organism>
    <name type="scientific">Photobacterium profundum (strain SS9)</name>
    <dbReference type="NCBI Taxonomy" id="298386"/>
    <lineage>
        <taxon>Bacteria</taxon>
        <taxon>Pseudomonadati</taxon>
        <taxon>Pseudomonadota</taxon>
        <taxon>Gammaproteobacteria</taxon>
        <taxon>Vibrionales</taxon>
        <taxon>Vibrionaceae</taxon>
        <taxon>Photobacterium</taxon>
    </lineage>
</organism>
<feature type="chain" id="PRO_0000309397" description="UPF0502 protein PBPRB0676">
    <location>
        <begin position="1"/>
        <end position="222"/>
    </location>
</feature>
<keyword id="KW-1185">Reference proteome</keyword>
<sequence length="222" mass="24649">MDINFSQNEARVIGCLLEKEVTTPDQYPLTLNALTTACNQKSNREPVMALDEATVLDTVELLKEKRLINDVSSFGSRVSKFQHRFCNTEFGSLKFTSQEFAAVCVMLLRGPQSAGEIRTRTNRLCTFSDVKEVEAMLDGLAEHAKGPYVVKLPRESGKRDCRYMHLFSGEVDVEALAAAVKSTSTAGLASANNERFAELEEDMKAMKLEIAELKELLESLTS</sequence>
<reference key="1">
    <citation type="journal article" date="2005" name="Science">
        <title>Life at depth: Photobacterium profundum genome sequence and expression analysis.</title>
        <authorList>
            <person name="Vezzi A."/>
            <person name="Campanaro S."/>
            <person name="D'Angelo M."/>
            <person name="Simonato F."/>
            <person name="Vitulo N."/>
            <person name="Lauro F.M."/>
            <person name="Cestaro A."/>
            <person name="Malacrida G."/>
            <person name="Simionati B."/>
            <person name="Cannata N."/>
            <person name="Romualdi C."/>
            <person name="Bartlett D.H."/>
            <person name="Valle G."/>
        </authorList>
    </citation>
    <scope>NUCLEOTIDE SEQUENCE [LARGE SCALE GENOMIC DNA]</scope>
    <source>
        <strain>ATCC BAA-1253 / SS9</strain>
    </source>
</reference>